<dbReference type="EMBL" id="AP004994">
    <property type="protein sequence ID" value="BAD37882.1"/>
    <property type="molecule type" value="Genomic_DNA"/>
</dbReference>
<dbReference type="EMBL" id="AP014962">
    <property type="status" value="NOT_ANNOTATED_CDS"/>
    <property type="molecule type" value="Genomic_DNA"/>
</dbReference>
<dbReference type="STRING" id="39947.Q67VD7"/>
<dbReference type="GlyCosmos" id="Q67VD7">
    <property type="glycosylation" value="3 sites, No reported glycans"/>
</dbReference>
<dbReference type="PaxDb" id="39947-Q67VD7"/>
<dbReference type="eggNOG" id="ENOG502QQHP">
    <property type="taxonomic scope" value="Eukaryota"/>
</dbReference>
<dbReference type="HOGENOM" id="CLU_024834_0_0_1"/>
<dbReference type="InParanoid" id="Q67VD7"/>
<dbReference type="Proteomes" id="UP000000763">
    <property type="component" value="Chromosome 6"/>
</dbReference>
<dbReference type="Proteomes" id="UP000059680">
    <property type="component" value="Chromosome 6"/>
</dbReference>
<dbReference type="InterPro" id="IPR044816">
    <property type="entry name" value="BURP"/>
</dbReference>
<dbReference type="InterPro" id="IPR004873">
    <property type="entry name" value="BURP_dom"/>
</dbReference>
<dbReference type="PANTHER" id="PTHR31236">
    <property type="entry name" value="BURP DOMAIN PROTEIN USPL1-LIKE"/>
    <property type="match status" value="1"/>
</dbReference>
<dbReference type="PANTHER" id="PTHR31236:SF21">
    <property type="entry name" value="BURP DOMAIN-CONTAINING PROTEIN 11"/>
    <property type="match status" value="1"/>
</dbReference>
<dbReference type="Pfam" id="PF03181">
    <property type="entry name" value="BURP"/>
    <property type="match status" value="1"/>
</dbReference>
<dbReference type="SMART" id="SM01045">
    <property type="entry name" value="BURP"/>
    <property type="match status" value="1"/>
</dbReference>
<dbReference type="PROSITE" id="PS51277">
    <property type="entry name" value="BURP"/>
    <property type="match status" value="1"/>
</dbReference>
<reference key="1">
    <citation type="journal article" date="2005" name="Nature">
        <title>The map-based sequence of the rice genome.</title>
        <authorList>
            <consortium name="International rice genome sequencing project (IRGSP)"/>
        </authorList>
    </citation>
    <scope>NUCLEOTIDE SEQUENCE [LARGE SCALE GENOMIC DNA]</scope>
    <source>
        <strain>cv. Nipponbare</strain>
    </source>
</reference>
<reference key="2">
    <citation type="journal article" date="2013" name="Rice">
        <title>Improvement of the Oryza sativa Nipponbare reference genome using next generation sequence and optical map data.</title>
        <authorList>
            <person name="Kawahara Y."/>
            <person name="de la Bastide M."/>
            <person name="Hamilton J.P."/>
            <person name="Kanamori H."/>
            <person name="McCombie W.R."/>
            <person name="Ouyang S."/>
            <person name="Schwartz D.C."/>
            <person name="Tanaka T."/>
            <person name="Wu J."/>
            <person name="Zhou S."/>
            <person name="Childs K.L."/>
            <person name="Davidson R.M."/>
            <person name="Lin H."/>
            <person name="Quesada-Ocampo L."/>
            <person name="Vaillancourt B."/>
            <person name="Sakai H."/>
            <person name="Lee S.S."/>
            <person name="Kim J."/>
            <person name="Numa H."/>
            <person name="Itoh T."/>
            <person name="Buell C.R."/>
            <person name="Matsumoto T."/>
        </authorList>
    </citation>
    <scope>GENOME REANNOTATION</scope>
    <source>
        <strain>cv. Nipponbare</strain>
    </source>
</reference>
<reference key="3">
    <citation type="journal article" date="2009" name="Planta">
        <title>Genome-wide identification of BURP domain-containing genes in rice reveals a gene family with diverse structures and responses to abiotic stresses.</title>
        <authorList>
            <person name="Ding X."/>
            <person name="Hou X."/>
            <person name="Xie K."/>
            <person name="Xiong L."/>
        </authorList>
    </citation>
    <scope>TISSUE SPECIFICITY</scope>
    <scope>GENE NOMENCLATURE</scope>
</reference>
<proteinExistence type="evidence at transcript level"/>
<name>BURP9_ORYSJ</name>
<evidence type="ECO:0000255" key="1"/>
<evidence type="ECO:0000255" key="2">
    <source>
        <dbReference type="PROSITE-ProRule" id="PRU00604"/>
    </source>
</evidence>
<evidence type="ECO:0000269" key="3">
    <source>
    </source>
</evidence>
<accession>Q67VD7</accession>
<gene>
    <name type="primary">BURP9</name>
    <name type="ordered locus">Os06g0240050</name>
    <name type="ordered locus">Os06g0240300</name>
    <name type="ordered locus">LOC_Os06g13240</name>
    <name type="ORF">OSJNBa0052G07.35</name>
</gene>
<sequence>MKATGGPLPLILFLLIIIVLITAQHTAIAKPFFSLNAFAQGQPNDKDDQNMGKFYVYNKAQTNNYADQRMRKFYLYNKDQANDWDDQKMEKFYLYHEGKTNDRDDQKRKNIYLYNEGHANGDDQTMEKFYLFNKDQAKDGDDQKMGKFYLYNKDQANDWDDQKMERFYLYNKGHANEGDDQTMEKFYLYNKGHANEEDDQTMEKFYLYNKGQAKDGDDQKMEKNYLYNKDQANDWDDQKIEKFYLYHEGKANYRDDQNMEKFYLYKKGEEHKYIHSHGHGHVHFPEGAKDLYFFEDNLAPGSVLITRILSARQSSIFLHRNNSKHIPFSMKNITDILTMFSPVSATMADGIAATLQACEHTGMVHGEKAKCATSIESLLDVVVSSLGTKLVRALTPGAPMEGVPSLRYIVASATPVPNSQSMLACHDMLYPYKVFFCHTPKQTRLYQVSLVSGESGRPLIDGLLAVCHQNTSDWDTGHPFFHFMDVKPGETTACHFFGRGSIIWVPVPSVKEATQ</sequence>
<organism>
    <name type="scientific">Oryza sativa subsp. japonica</name>
    <name type="common">Rice</name>
    <dbReference type="NCBI Taxonomy" id="39947"/>
    <lineage>
        <taxon>Eukaryota</taxon>
        <taxon>Viridiplantae</taxon>
        <taxon>Streptophyta</taxon>
        <taxon>Embryophyta</taxon>
        <taxon>Tracheophyta</taxon>
        <taxon>Spermatophyta</taxon>
        <taxon>Magnoliopsida</taxon>
        <taxon>Liliopsida</taxon>
        <taxon>Poales</taxon>
        <taxon>Poaceae</taxon>
        <taxon>BOP clade</taxon>
        <taxon>Oryzoideae</taxon>
        <taxon>Oryzeae</taxon>
        <taxon>Oryzinae</taxon>
        <taxon>Oryza</taxon>
        <taxon>Oryza sativa</taxon>
    </lineage>
</organism>
<comment type="tissue specificity">
    <text evidence="3">Expressed in shoot and panicles.</text>
</comment>
<feature type="signal peptide" evidence="1">
    <location>
        <begin position="1"/>
        <end position="29"/>
    </location>
</feature>
<feature type="chain" id="PRO_0000375836" description="BURP domain-containing protein 9">
    <location>
        <begin position="30"/>
        <end position="515"/>
    </location>
</feature>
<feature type="domain" description="BURP" evidence="2">
    <location>
        <begin position="292"/>
        <end position="507"/>
    </location>
</feature>
<feature type="glycosylation site" description="N-linked (GlcNAc...) asparagine" evidence="1">
    <location>
        <position position="321"/>
    </location>
</feature>
<feature type="glycosylation site" description="N-linked (GlcNAc...) asparagine" evidence="1">
    <location>
        <position position="332"/>
    </location>
</feature>
<feature type="glycosylation site" description="N-linked (GlcNAc...) asparagine" evidence="1">
    <location>
        <position position="470"/>
    </location>
</feature>
<protein>
    <recommendedName>
        <fullName>BURP domain-containing protein 9</fullName>
        <shortName>OsBURP09</shortName>
    </recommendedName>
</protein>
<keyword id="KW-0325">Glycoprotein</keyword>
<keyword id="KW-1185">Reference proteome</keyword>
<keyword id="KW-0732">Signal</keyword>